<feature type="chain" id="PRO_1000011322" description="Probable endonuclease 4">
    <location>
        <begin position="1"/>
        <end position="277"/>
    </location>
</feature>
<feature type="binding site" evidence="1">
    <location>
        <position position="70"/>
    </location>
    <ligand>
        <name>Zn(2+)</name>
        <dbReference type="ChEBI" id="CHEBI:29105"/>
        <label>1</label>
    </ligand>
</feature>
<feature type="binding site" evidence="1">
    <location>
        <position position="108"/>
    </location>
    <ligand>
        <name>Zn(2+)</name>
        <dbReference type="ChEBI" id="CHEBI:29105"/>
        <label>1</label>
    </ligand>
</feature>
<feature type="binding site" evidence="1">
    <location>
        <position position="143"/>
    </location>
    <ligand>
        <name>Zn(2+)</name>
        <dbReference type="ChEBI" id="CHEBI:29105"/>
        <label>1</label>
    </ligand>
</feature>
<feature type="binding site" evidence="1">
    <location>
        <position position="143"/>
    </location>
    <ligand>
        <name>Zn(2+)</name>
        <dbReference type="ChEBI" id="CHEBI:29105"/>
        <label>2</label>
    </ligand>
</feature>
<feature type="binding site" evidence="1">
    <location>
        <position position="176"/>
    </location>
    <ligand>
        <name>Zn(2+)</name>
        <dbReference type="ChEBI" id="CHEBI:29105"/>
        <label>2</label>
    </ligand>
</feature>
<feature type="binding site" evidence="1">
    <location>
        <position position="179"/>
    </location>
    <ligand>
        <name>Zn(2+)</name>
        <dbReference type="ChEBI" id="CHEBI:29105"/>
        <label>3</label>
    </ligand>
</feature>
<feature type="binding site" evidence="1">
    <location>
        <position position="210"/>
    </location>
    <ligand>
        <name>Zn(2+)</name>
        <dbReference type="ChEBI" id="CHEBI:29105"/>
        <label>2</label>
    </ligand>
</feature>
<feature type="binding site" evidence="1">
    <location>
        <position position="223"/>
    </location>
    <ligand>
        <name>Zn(2+)</name>
        <dbReference type="ChEBI" id="CHEBI:29105"/>
        <label>3</label>
    </ligand>
</feature>
<feature type="binding site" evidence="1">
    <location>
        <position position="225"/>
    </location>
    <ligand>
        <name>Zn(2+)</name>
        <dbReference type="ChEBI" id="CHEBI:29105"/>
        <label>3</label>
    </ligand>
</feature>
<feature type="binding site" evidence="1">
    <location>
        <position position="255"/>
    </location>
    <ligand>
        <name>Zn(2+)</name>
        <dbReference type="ChEBI" id="CHEBI:29105"/>
        <label>2</label>
    </ligand>
</feature>
<reference key="1">
    <citation type="journal article" date="2005" name="J. Bacteriol.">
        <title>Swine and poultry pathogens: the complete genome sequences of two strains of Mycoplasma hyopneumoniae and a strain of Mycoplasma synoviae.</title>
        <authorList>
            <person name="Vasconcelos A.T.R."/>
            <person name="Ferreira H.B."/>
            <person name="Bizarro C.V."/>
            <person name="Bonatto S.L."/>
            <person name="Carvalho M.O."/>
            <person name="Pinto P.M."/>
            <person name="Almeida D.F."/>
            <person name="Almeida L.G.P."/>
            <person name="Almeida R."/>
            <person name="Alves-Junior L."/>
            <person name="Assuncao E.N."/>
            <person name="Azevedo V.A.C."/>
            <person name="Bogo M.R."/>
            <person name="Brigido M.M."/>
            <person name="Brocchi M."/>
            <person name="Burity H.A."/>
            <person name="Camargo A.A."/>
            <person name="Camargo S.S."/>
            <person name="Carepo M.S."/>
            <person name="Carraro D.M."/>
            <person name="de Mattos Cascardo J.C."/>
            <person name="Castro L.A."/>
            <person name="Cavalcanti G."/>
            <person name="Chemale G."/>
            <person name="Collevatti R.G."/>
            <person name="Cunha C.W."/>
            <person name="Dallagiovanna B."/>
            <person name="Dambros B.P."/>
            <person name="Dellagostin O.A."/>
            <person name="Falcao C."/>
            <person name="Fantinatti-Garboggini F."/>
            <person name="Felipe M.S.S."/>
            <person name="Fiorentin L."/>
            <person name="Franco G.R."/>
            <person name="Freitas N.S.A."/>
            <person name="Frias D."/>
            <person name="Grangeiro T.B."/>
            <person name="Grisard E.C."/>
            <person name="Guimaraes C.T."/>
            <person name="Hungria M."/>
            <person name="Jardim S.N."/>
            <person name="Krieger M.A."/>
            <person name="Laurino J.P."/>
            <person name="Lima L.F.A."/>
            <person name="Lopes M.I."/>
            <person name="Loreto E.L.S."/>
            <person name="Madeira H.M.F."/>
            <person name="Manfio G.P."/>
            <person name="Maranhao A.Q."/>
            <person name="Martinkovics C.T."/>
            <person name="Medeiros S.R.B."/>
            <person name="Moreira M.A.M."/>
            <person name="Neiva M."/>
            <person name="Ramalho-Neto C.E."/>
            <person name="Nicolas M.F."/>
            <person name="Oliveira S.C."/>
            <person name="Paixao R.F.C."/>
            <person name="Pedrosa F.O."/>
            <person name="Pena S.D.J."/>
            <person name="Pereira M."/>
            <person name="Pereira-Ferrari L."/>
            <person name="Piffer I."/>
            <person name="Pinto L.S."/>
            <person name="Potrich D.P."/>
            <person name="Salim A.C.M."/>
            <person name="Santos F.R."/>
            <person name="Schmitt R."/>
            <person name="Schneider M.P.C."/>
            <person name="Schrank A."/>
            <person name="Schrank I.S."/>
            <person name="Schuck A.F."/>
            <person name="Seuanez H.N."/>
            <person name="Silva D.W."/>
            <person name="Silva R."/>
            <person name="Silva S.C."/>
            <person name="Soares C.M.A."/>
            <person name="Souza K.R.L."/>
            <person name="Souza R.C."/>
            <person name="Staats C.C."/>
            <person name="Steffens M.B.R."/>
            <person name="Teixeira S.M.R."/>
            <person name="Urmenyi T.P."/>
            <person name="Vainstein M.H."/>
            <person name="Zuccherato L.W."/>
            <person name="Simpson A.J.G."/>
            <person name="Zaha A."/>
        </authorList>
    </citation>
    <scope>NUCLEOTIDE SEQUENCE [LARGE SCALE GENOMIC DNA]</scope>
    <source>
        <strain>53</strain>
    </source>
</reference>
<protein>
    <recommendedName>
        <fullName evidence="1">Probable endonuclease 4</fullName>
        <ecNumber evidence="1">3.1.21.2</ecNumber>
    </recommendedName>
    <alternativeName>
        <fullName evidence="1">Endodeoxyribonuclease IV</fullName>
    </alternativeName>
    <alternativeName>
        <fullName evidence="1">Endonuclease IV</fullName>
    </alternativeName>
</protein>
<evidence type="ECO:0000255" key="1">
    <source>
        <dbReference type="HAMAP-Rule" id="MF_00152"/>
    </source>
</evidence>
<proteinExistence type="inferred from homology"/>
<dbReference type="EC" id="3.1.21.2" evidence="1"/>
<dbReference type="EMBL" id="AE017245">
    <property type="protein sequence ID" value="AAZ43546.1"/>
    <property type="molecule type" value="Genomic_DNA"/>
</dbReference>
<dbReference type="RefSeq" id="WP_011283289.1">
    <property type="nucleotide sequence ID" value="NC_007294.1"/>
</dbReference>
<dbReference type="SMR" id="Q4A6S5"/>
<dbReference type="STRING" id="262723.MS53_0125"/>
<dbReference type="KEGG" id="msy:MS53_0125"/>
<dbReference type="eggNOG" id="COG0648">
    <property type="taxonomic scope" value="Bacteria"/>
</dbReference>
<dbReference type="HOGENOM" id="CLU_025885_0_4_14"/>
<dbReference type="OrthoDB" id="9805666at2"/>
<dbReference type="Proteomes" id="UP000000549">
    <property type="component" value="Chromosome"/>
</dbReference>
<dbReference type="GO" id="GO:0008833">
    <property type="term" value="F:deoxyribonuclease IV (phage-T4-induced) activity"/>
    <property type="evidence" value="ECO:0007669"/>
    <property type="project" value="UniProtKB-UniRule"/>
</dbReference>
<dbReference type="GO" id="GO:0003677">
    <property type="term" value="F:DNA binding"/>
    <property type="evidence" value="ECO:0007669"/>
    <property type="project" value="InterPro"/>
</dbReference>
<dbReference type="GO" id="GO:0003906">
    <property type="term" value="F:DNA-(apurinic or apyrimidinic site) endonuclease activity"/>
    <property type="evidence" value="ECO:0007669"/>
    <property type="project" value="TreeGrafter"/>
</dbReference>
<dbReference type="GO" id="GO:0008081">
    <property type="term" value="F:phosphoric diester hydrolase activity"/>
    <property type="evidence" value="ECO:0007669"/>
    <property type="project" value="TreeGrafter"/>
</dbReference>
<dbReference type="GO" id="GO:0008270">
    <property type="term" value="F:zinc ion binding"/>
    <property type="evidence" value="ECO:0007669"/>
    <property type="project" value="UniProtKB-UniRule"/>
</dbReference>
<dbReference type="GO" id="GO:0006284">
    <property type="term" value="P:base-excision repair"/>
    <property type="evidence" value="ECO:0007669"/>
    <property type="project" value="TreeGrafter"/>
</dbReference>
<dbReference type="CDD" id="cd00019">
    <property type="entry name" value="AP2Ec"/>
    <property type="match status" value="1"/>
</dbReference>
<dbReference type="FunFam" id="3.20.20.150:FF:000001">
    <property type="entry name" value="Probable endonuclease 4"/>
    <property type="match status" value="1"/>
</dbReference>
<dbReference type="Gene3D" id="3.20.20.150">
    <property type="entry name" value="Divalent-metal-dependent TIM barrel enzymes"/>
    <property type="match status" value="1"/>
</dbReference>
<dbReference type="HAMAP" id="MF_00152">
    <property type="entry name" value="Nfo"/>
    <property type="match status" value="1"/>
</dbReference>
<dbReference type="InterPro" id="IPR001719">
    <property type="entry name" value="AP_endonuc_2"/>
</dbReference>
<dbReference type="InterPro" id="IPR018246">
    <property type="entry name" value="AP_endonuc_F2_Zn_BS"/>
</dbReference>
<dbReference type="InterPro" id="IPR036237">
    <property type="entry name" value="Xyl_isomerase-like_sf"/>
</dbReference>
<dbReference type="InterPro" id="IPR013022">
    <property type="entry name" value="Xyl_isomerase-like_TIM-brl"/>
</dbReference>
<dbReference type="NCBIfam" id="TIGR00587">
    <property type="entry name" value="nfo"/>
    <property type="match status" value="1"/>
</dbReference>
<dbReference type="NCBIfam" id="NF002196">
    <property type="entry name" value="PRK01060.1-1"/>
    <property type="match status" value="1"/>
</dbReference>
<dbReference type="PANTHER" id="PTHR21445:SF0">
    <property type="entry name" value="APURINIC-APYRIMIDINIC ENDONUCLEASE"/>
    <property type="match status" value="1"/>
</dbReference>
<dbReference type="PANTHER" id="PTHR21445">
    <property type="entry name" value="ENDONUCLEASE IV ENDODEOXYRIBONUCLEASE IV"/>
    <property type="match status" value="1"/>
</dbReference>
<dbReference type="Pfam" id="PF01261">
    <property type="entry name" value="AP_endonuc_2"/>
    <property type="match status" value="1"/>
</dbReference>
<dbReference type="SMART" id="SM00518">
    <property type="entry name" value="AP2Ec"/>
    <property type="match status" value="1"/>
</dbReference>
<dbReference type="SUPFAM" id="SSF51658">
    <property type="entry name" value="Xylose isomerase-like"/>
    <property type="match status" value="1"/>
</dbReference>
<dbReference type="PROSITE" id="PS00729">
    <property type="entry name" value="AP_NUCLEASE_F2_1"/>
    <property type="match status" value="1"/>
</dbReference>
<dbReference type="PROSITE" id="PS00730">
    <property type="entry name" value="AP_NUCLEASE_F2_2"/>
    <property type="match status" value="1"/>
</dbReference>
<dbReference type="PROSITE" id="PS51432">
    <property type="entry name" value="AP_NUCLEASE_F2_4"/>
    <property type="match status" value="1"/>
</dbReference>
<comment type="function">
    <text evidence="1">Endonuclease IV plays a role in DNA repair. It cleaves phosphodiester bonds at apurinic or apyrimidinic (AP) sites, generating a 3'-hydroxyl group and a 5'-terminal sugar phosphate.</text>
</comment>
<comment type="catalytic activity">
    <reaction evidence="1">
        <text>Endonucleolytic cleavage to 5'-phosphooligonucleotide end-products.</text>
        <dbReference type="EC" id="3.1.21.2"/>
    </reaction>
</comment>
<comment type="cofactor">
    <cofactor evidence="1">
        <name>Zn(2+)</name>
        <dbReference type="ChEBI" id="CHEBI:29105"/>
    </cofactor>
    <text evidence="1">Binds 3 Zn(2+) ions.</text>
</comment>
<comment type="similarity">
    <text evidence="1">Belongs to the AP endonuclease 2 family.</text>
</comment>
<accession>Q4A6S5</accession>
<keyword id="KW-0227">DNA damage</keyword>
<keyword id="KW-0234">DNA repair</keyword>
<keyword id="KW-0255">Endonuclease</keyword>
<keyword id="KW-0378">Hydrolase</keyword>
<keyword id="KW-0479">Metal-binding</keyword>
<keyword id="KW-0540">Nuclease</keyword>
<keyword id="KW-1185">Reference proteome</keyword>
<keyword id="KW-0862">Zinc</keyword>
<gene>
    <name evidence="1" type="primary">nfo</name>
    <name type="ordered locus">MS53_0125</name>
</gene>
<sequence>MIKLGSHVSFKKPNYLAGAAGESINNKANTMMIYLGAPQTTKRVEFELYKKQEYLDFYAKDIPAEDIIVHAPYIINPANPTKAKFSCDFLIQEINRMNYINAKYLVLHPGAYTEFAPQEALDQLVKSLTHILSKTKDVVICIETMAGKGTEIGINFEQISYLINKLNSDRIAICLDTCHLWDAGYNLKDYQSFKDELKKWNLLKHVKVIHLNDSKNELSSHKDRHANIDQGHIGLETLAKFVHDKDFDNIPIILETPYVDNKPIYDVEIQMLLNKKP</sequence>
<name>END4_MYCS5</name>
<organism>
    <name type="scientific">Mycoplasmopsis synoviae (strain 53)</name>
    <name type="common">Mycoplasma synoviae</name>
    <dbReference type="NCBI Taxonomy" id="262723"/>
    <lineage>
        <taxon>Bacteria</taxon>
        <taxon>Bacillati</taxon>
        <taxon>Mycoplasmatota</taxon>
        <taxon>Mycoplasmoidales</taxon>
        <taxon>Metamycoplasmataceae</taxon>
        <taxon>Mycoplasmopsis</taxon>
    </lineage>
</organism>